<keyword id="KW-0009">Actin-binding</keyword>
<keyword id="KW-0020">Allergen</keyword>
<keyword id="KW-0963">Cytoplasm</keyword>
<keyword id="KW-0206">Cytoskeleton</keyword>
<evidence type="ECO:0000250" key="1"/>
<evidence type="ECO:0000305" key="2"/>
<proteinExistence type="evidence at protein level"/>
<comment type="function">
    <text evidence="1">Binds to actin and affects the structure of the cytoskeleton. At high concentrations, profilin prevents the polymerization of actin, whereas it enhances it at low concentrations. By binding to PIP2, it inhibits the formation of IP3 and DG (By similarity).</text>
</comment>
<comment type="subunit">
    <text>Occurs in many kinds of cells as a complex with monomeric actin in a 1:1 ratio.</text>
</comment>
<comment type="subcellular location">
    <subcellularLocation>
        <location evidence="1">Cytoplasm</location>
        <location evidence="1">Cytoskeleton</location>
    </subcellularLocation>
</comment>
<comment type="allergen">
    <text>Causes an allergic reaction in human.</text>
</comment>
<comment type="similarity">
    <text evidence="2">Belongs to the profilin family.</text>
</comment>
<protein>
    <recommendedName>
        <fullName>Profilin</fullName>
    </recommendedName>
    <allergenName>Pru du 4</allergenName>
</protein>
<reference key="1">
    <citation type="submission" date="2002-03" db="EMBL/GenBank/DDBJ databases">
        <authorList>
            <person name="Wang F."/>
            <person name="Roux K.H."/>
            <person name="Teuber T.S."/>
            <person name="Sathe S.K."/>
        </authorList>
    </citation>
    <scope>NUCLEOTIDE SEQUENCE [MRNA]</scope>
</reference>
<sequence>MSWQQYVDDHLMCDIDGNRLTAAAILGQDGSVWSQSATFPAFKPEEIAAILKDFDQPGTLAPTGLFLGGTKYMVIQGEAGAVIRGKKGSGGITVKKTNQALIIGIYDEPLTPGQCNMIVERLGDYLIEQGL</sequence>
<organism>
    <name type="scientific">Prunus dulcis</name>
    <name type="common">Almond</name>
    <name type="synonym">Amygdalus dulcis</name>
    <dbReference type="NCBI Taxonomy" id="3755"/>
    <lineage>
        <taxon>Eukaryota</taxon>
        <taxon>Viridiplantae</taxon>
        <taxon>Streptophyta</taxon>
        <taxon>Embryophyta</taxon>
        <taxon>Tracheophyta</taxon>
        <taxon>Spermatophyta</taxon>
        <taxon>Magnoliopsida</taxon>
        <taxon>eudicotyledons</taxon>
        <taxon>Gunneridae</taxon>
        <taxon>Pentapetalae</taxon>
        <taxon>rosids</taxon>
        <taxon>fabids</taxon>
        <taxon>Rosales</taxon>
        <taxon>Rosaceae</taxon>
        <taxon>Amygdaloideae</taxon>
        <taxon>Amygdaleae</taxon>
        <taxon>Prunus</taxon>
    </lineage>
</organism>
<dbReference type="EMBL" id="AY081850">
    <property type="protein sequence ID" value="AAL91662.1"/>
    <property type="molecule type" value="mRNA"/>
</dbReference>
<dbReference type="EMBL" id="AY081852">
    <property type="protein sequence ID" value="AAL91664.1"/>
    <property type="molecule type" value="mRNA"/>
</dbReference>
<dbReference type="RefSeq" id="NP_001391898.1">
    <property type="nucleotide sequence ID" value="NM_001404969.1"/>
</dbReference>
<dbReference type="SMR" id="Q8GSL5"/>
<dbReference type="Allergome" id="1047">
    <property type="allergen name" value="Pru du 4"/>
</dbReference>
<dbReference type="Allergome" id="3452">
    <property type="allergen name" value="Pru du 4.0101"/>
</dbReference>
<dbReference type="Allergome" id="3453">
    <property type="allergen name" value="Pru du 4.0102"/>
</dbReference>
<dbReference type="EnsemblPlants" id="VVA24821">
    <property type="protein sequence ID" value="VVA24821"/>
    <property type="gene ID" value="Prudul26B019649"/>
</dbReference>
<dbReference type="GeneID" id="117616037"/>
<dbReference type="Gramene" id="VVA24821">
    <property type="protein sequence ID" value="VVA24821"/>
    <property type="gene ID" value="Prudul26B019649"/>
</dbReference>
<dbReference type="OMA" id="NETMSWQ"/>
<dbReference type="GO" id="GO:0005938">
    <property type="term" value="C:cell cortex"/>
    <property type="evidence" value="ECO:0007669"/>
    <property type="project" value="TreeGrafter"/>
</dbReference>
<dbReference type="GO" id="GO:0005856">
    <property type="term" value="C:cytoskeleton"/>
    <property type="evidence" value="ECO:0007669"/>
    <property type="project" value="UniProtKB-SubCell"/>
</dbReference>
<dbReference type="GO" id="GO:0003785">
    <property type="term" value="F:actin monomer binding"/>
    <property type="evidence" value="ECO:0007669"/>
    <property type="project" value="TreeGrafter"/>
</dbReference>
<dbReference type="CDD" id="cd00148">
    <property type="entry name" value="PROF"/>
    <property type="match status" value="1"/>
</dbReference>
<dbReference type="FunFam" id="3.30.450.30:FF:000001">
    <property type="entry name" value="Profilin"/>
    <property type="match status" value="1"/>
</dbReference>
<dbReference type="Gene3D" id="3.30.450.30">
    <property type="entry name" value="Dynein light chain 2a, cytoplasmic"/>
    <property type="match status" value="1"/>
</dbReference>
<dbReference type="InterPro" id="IPR048278">
    <property type="entry name" value="PFN"/>
</dbReference>
<dbReference type="InterPro" id="IPR005455">
    <property type="entry name" value="PFN_euk"/>
</dbReference>
<dbReference type="InterPro" id="IPR036140">
    <property type="entry name" value="PFN_sf"/>
</dbReference>
<dbReference type="InterPro" id="IPR027310">
    <property type="entry name" value="Profilin_CS"/>
</dbReference>
<dbReference type="PANTHER" id="PTHR11604">
    <property type="entry name" value="PROFILIN"/>
    <property type="match status" value="1"/>
</dbReference>
<dbReference type="PANTHER" id="PTHR11604:SF59">
    <property type="entry name" value="PROFILIN"/>
    <property type="match status" value="1"/>
</dbReference>
<dbReference type="Pfam" id="PF00235">
    <property type="entry name" value="Profilin"/>
    <property type="match status" value="1"/>
</dbReference>
<dbReference type="PRINTS" id="PR00392">
    <property type="entry name" value="PROFILIN"/>
</dbReference>
<dbReference type="PRINTS" id="PR01640">
    <property type="entry name" value="PROFILINPLNT"/>
</dbReference>
<dbReference type="SMART" id="SM00392">
    <property type="entry name" value="PROF"/>
    <property type="match status" value="1"/>
</dbReference>
<dbReference type="SUPFAM" id="SSF55770">
    <property type="entry name" value="Profilin (actin-binding protein)"/>
    <property type="match status" value="1"/>
</dbReference>
<dbReference type="PROSITE" id="PS00414">
    <property type="entry name" value="PROFILIN"/>
    <property type="match status" value="1"/>
</dbReference>
<name>PROF_PRUDU</name>
<feature type="initiator methionine" description="Removed" evidence="1">
    <location>
        <position position="1"/>
    </location>
</feature>
<feature type="chain" id="PRO_0000199668" description="Profilin">
    <location>
        <begin position="2"/>
        <end position="131"/>
    </location>
</feature>
<accession>Q8GSL5</accession>